<gene>
    <name evidence="1" type="primary">tpm</name>
    <name type="ordered locus">Pput_3845</name>
</gene>
<organism>
    <name type="scientific">Pseudomonas putida (strain ATCC 700007 / DSM 6899 / JCM 31910 / BCRC 17059 / LMG 24140 / F1)</name>
    <dbReference type="NCBI Taxonomy" id="351746"/>
    <lineage>
        <taxon>Bacteria</taxon>
        <taxon>Pseudomonadati</taxon>
        <taxon>Pseudomonadota</taxon>
        <taxon>Gammaproteobacteria</taxon>
        <taxon>Pseudomonadales</taxon>
        <taxon>Pseudomonadaceae</taxon>
        <taxon>Pseudomonas</taxon>
    </lineage>
</organism>
<proteinExistence type="inferred from homology"/>
<sequence length="216" mass="24424">MEPAFWQQRWADNQIGFHQAQVNPYLQTYWPQLQLAPGSRVLVPLCGKSLDLAWLAGQGHRVLGVELSRRAVEDFFREHGLEAEVRQQGAFEVWRSGDVQLWCGDFFALRAEDVADCVGLYDRAAVIALPVQMRARYMQLLSGLLPTSCRGLVVTLDYDQSLLAGPPFSVRDEELRQGFAGWQVEQLEAVEVIEESPKFVQAGASSLLERVYRLSR</sequence>
<evidence type="ECO:0000255" key="1">
    <source>
        <dbReference type="HAMAP-Rule" id="MF_00812"/>
    </source>
</evidence>
<dbReference type="EC" id="2.1.1.67" evidence="1"/>
<dbReference type="EMBL" id="CP000712">
    <property type="protein sequence ID" value="ABQ79969.1"/>
    <property type="molecule type" value="Genomic_DNA"/>
</dbReference>
<dbReference type="SMR" id="A5W759"/>
<dbReference type="KEGG" id="ppf:Pput_3845"/>
<dbReference type="eggNOG" id="COG0500">
    <property type="taxonomic scope" value="Bacteria"/>
</dbReference>
<dbReference type="HOGENOM" id="CLU_085515_1_0_6"/>
<dbReference type="GO" id="GO:0005737">
    <property type="term" value="C:cytoplasm"/>
    <property type="evidence" value="ECO:0007669"/>
    <property type="project" value="UniProtKB-SubCell"/>
</dbReference>
<dbReference type="GO" id="GO:0008119">
    <property type="term" value="F:thiopurine S-methyltransferase activity"/>
    <property type="evidence" value="ECO:0007669"/>
    <property type="project" value="UniProtKB-UniRule"/>
</dbReference>
<dbReference type="GO" id="GO:0032259">
    <property type="term" value="P:methylation"/>
    <property type="evidence" value="ECO:0007669"/>
    <property type="project" value="UniProtKB-KW"/>
</dbReference>
<dbReference type="GO" id="GO:0010038">
    <property type="term" value="P:response to metal ion"/>
    <property type="evidence" value="ECO:0007669"/>
    <property type="project" value="InterPro"/>
</dbReference>
<dbReference type="FunFam" id="3.40.50.150:FF:000101">
    <property type="entry name" value="Thiopurine S-methyltransferase"/>
    <property type="match status" value="1"/>
</dbReference>
<dbReference type="Gene3D" id="3.40.50.150">
    <property type="entry name" value="Vaccinia Virus protein VP39"/>
    <property type="match status" value="1"/>
</dbReference>
<dbReference type="HAMAP" id="MF_00812">
    <property type="entry name" value="Thiopur_methtran"/>
    <property type="match status" value="1"/>
</dbReference>
<dbReference type="InterPro" id="IPR029063">
    <property type="entry name" value="SAM-dependent_MTases_sf"/>
</dbReference>
<dbReference type="InterPro" id="IPR022474">
    <property type="entry name" value="Thiopur_S-MeTfrase_Se/Te_detox"/>
</dbReference>
<dbReference type="InterPro" id="IPR025835">
    <property type="entry name" value="Thiopurine_S-MeTrfase"/>
</dbReference>
<dbReference type="InterPro" id="IPR008854">
    <property type="entry name" value="TPMT"/>
</dbReference>
<dbReference type="NCBIfam" id="NF009732">
    <property type="entry name" value="PRK13255.1"/>
    <property type="match status" value="1"/>
</dbReference>
<dbReference type="NCBIfam" id="TIGR03840">
    <property type="entry name" value="TMPT_Se_Te"/>
    <property type="match status" value="1"/>
</dbReference>
<dbReference type="PANTHER" id="PTHR10259">
    <property type="entry name" value="THIOPURINE S-METHYLTRANSFERASE"/>
    <property type="match status" value="1"/>
</dbReference>
<dbReference type="PANTHER" id="PTHR10259:SF11">
    <property type="entry name" value="THIOPURINE S-METHYLTRANSFERASE"/>
    <property type="match status" value="1"/>
</dbReference>
<dbReference type="Pfam" id="PF05724">
    <property type="entry name" value="TPMT"/>
    <property type="match status" value="1"/>
</dbReference>
<dbReference type="PIRSF" id="PIRSF023956">
    <property type="entry name" value="Thiopurine_S-methyltransferase"/>
    <property type="match status" value="1"/>
</dbReference>
<dbReference type="SUPFAM" id="SSF53335">
    <property type="entry name" value="S-adenosyl-L-methionine-dependent methyltransferases"/>
    <property type="match status" value="1"/>
</dbReference>
<dbReference type="PROSITE" id="PS51585">
    <property type="entry name" value="SAM_MT_TPMT"/>
    <property type="match status" value="1"/>
</dbReference>
<accession>A5W759</accession>
<name>TPMT_PSEP1</name>
<feature type="chain" id="PRO_1000047213" description="Thiopurine S-methyltransferase">
    <location>
        <begin position="1"/>
        <end position="216"/>
    </location>
</feature>
<feature type="binding site" evidence="1">
    <location>
        <position position="10"/>
    </location>
    <ligand>
        <name>S-adenosyl-L-methionine</name>
        <dbReference type="ChEBI" id="CHEBI:59789"/>
    </ligand>
</feature>
<feature type="binding site" evidence="1">
    <location>
        <position position="45"/>
    </location>
    <ligand>
        <name>S-adenosyl-L-methionine</name>
        <dbReference type="ChEBI" id="CHEBI:59789"/>
    </ligand>
</feature>
<feature type="binding site" evidence="1">
    <location>
        <position position="66"/>
    </location>
    <ligand>
        <name>S-adenosyl-L-methionine</name>
        <dbReference type="ChEBI" id="CHEBI:59789"/>
    </ligand>
</feature>
<feature type="binding site" evidence="1">
    <location>
        <position position="123"/>
    </location>
    <ligand>
        <name>S-adenosyl-L-methionine</name>
        <dbReference type="ChEBI" id="CHEBI:59789"/>
    </ligand>
</feature>
<protein>
    <recommendedName>
        <fullName evidence="1">Thiopurine S-methyltransferase</fullName>
        <ecNumber evidence="1">2.1.1.67</ecNumber>
    </recommendedName>
    <alternativeName>
        <fullName evidence="1">Thiopurine methyltransferase</fullName>
    </alternativeName>
</protein>
<reference key="1">
    <citation type="submission" date="2007-05" db="EMBL/GenBank/DDBJ databases">
        <title>Complete sequence of Pseudomonas putida F1.</title>
        <authorList>
            <consortium name="US DOE Joint Genome Institute"/>
            <person name="Copeland A."/>
            <person name="Lucas S."/>
            <person name="Lapidus A."/>
            <person name="Barry K."/>
            <person name="Detter J.C."/>
            <person name="Glavina del Rio T."/>
            <person name="Hammon N."/>
            <person name="Israni S."/>
            <person name="Dalin E."/>
            <person name="Tice H."/>
            <person name="Pitluck S."/>
            <person name="Chain P."/>
            <person name="Malfatti S."/>
            <person name="Shin M."/>
            <person name="Vergez L."/>
            <person name="Schmutz J."/>
            <person name="Larimer F."/>
            <person name="Land M."/>
            <person name="Hauser L."/>
            <person name="Kyrpides N."/>
            <person name="Lykidis A."/>
            <person name="Parales R."/>
            <person name="Richardson P."/>
        </authorList>
    </citation>
    <scope>NUCLEOTIDE SEQUENCE [LARGE SCALE GENOMIC DNA]</scope>
    <source>
        <strain>ATCC 700007 / DSM 6899 / JCM 31910 / BCRC 17059 / LMG 24140 / F1</strain>
    </source>
</reference>
<comment type="catalytic activity">
    <reaction evidence="1">
        <text>S-adenosyl-L-methionine + a thiopurine = S-adenosyl-L-homocysteine + a thiopurine S-methylether.</text>
        <dbReference type="EC" id="2.1.1.67"/>
    </reaction>
</comment>
<comment type="subcellular location">
    <subcellularLocation>
        <location evidence="1">Cytoplasm</location>
    </subcellularLocation>
</comment>
<comment type="similarity">
    <text evidence="1">Belongs to the class I-like SAM-binding methyltransferase superfamily. TPMT family.</text>
</comment>
<keyword id="KW-0963">Cytoplasm</keyword>
<keyword id="KW-0489">Methyltransferase</keyword>
<keyword id="KW-0949">S-adenosyl-L-methionine</keyword>
<keyword id="KW-0808">Transferase</keyword>